<dbReference type="EMBL" id="M16809">
    <property type="protein sequence ID" value="AAA82871.1"/>
    <property type="molecule type" value="Genomic_DNA"/>
</dbReference>
<dbReference type="EMBL" id="U12980">
    <property type="protein sequence ID" value="AAC04990.1"/>
    <property type="molecule type" value="Genomic_DNA"/>
</dbReference>
<dbReference type="EMBL" id="BK006935">
    <property type="protein sequence ID" value="DAA06945.1"/>
    <property type="molecule type" value="Genomic_DNA"/>
</dbReference>
<dbReference type="PIR" id="A27477">
    <property type="entry name" value="A27477"/>
</dbReference>
<dbReference type="RefSeq" id="NP_009359.1">
    <property type="nucleotide sequence ID" value="NM_001178186.1"/>
</dbReference>
<dbReference type="PDB" id="1PQS">
    <property type="method" value="NMR"/>
    <property type="chains" value="A=778-854"/>
</dbReference>
<dbReference type="PDB" id="1Q1O">
    <property type="method" value="NMR"/>
    <property type="chains" value="A=761-854"/>
</dbReference>
<dbReference type="PDB" id="1TZ1">
    <property type="method" value="NMR"/>
    <property type="chains" value="A=780-854"/>
</dbReference>
<dbReference type="PDB" id="2KFJ">
    <property type="method" value="NMR"/>
    <property type="chains" value="A=761-854"/>
</dbReference>
<dbReference type="PDB" id="2KFK">
    <property type="method" value="NMR"/>
    <property type="chains" value="B=761-854"/>
</dbReference>
<dbReference type="PDBsum" id="1PQS"/>
<dbReference type="PDBsum" id="1Q1O"/>
<dbReference type="PDBsum" id="1TZ1"/>
<dbReference type="PDBsum" id="2KFJ"/>
<dbReference type="PDBsum" id="2KFK"/>
<dbReference type="SMR" id="P11433"/>
<dbReference type="BioGRID" id="31724">
    <property type="interactions" value="719"/>
</dbReference>
<dbReference type="ComplexPortal" id="CPX-3462">
    <property type="entry name" value="CLA4-BEM1-CDC24 polarity complex"/>
</dbReference>
<dbReference type="ComplexPortal" id="CPX-977">
    <property type="entry name" value="CDC24-FAR1-Gbetagamma complex"/>
</dbReference>
<dbReference type="DIP" id="DIP-2228N"/>
<dbReference type="FunCoup" id="P11433">
    <property type="interactions" value="190"/>
</dbReference>
<dbReference type="IntAct" id="P11433">
    <property type="interactions" value="46"/>
</dbReference>
<dbReference type="MINT" id="P11433"/>
<dbReference type="STRING" id="4932.YAL041W"/>
<dbReference type="GlyGen" id="P11433">
    <property type="glycosylation" value="1 site, 1 O-linked glycan (1 site)"/>
</dbReference>
<dbReference type="iPTMnet" id="P11433"/>
<dbReference type="PaxDb" id="4932-YAL041W"/>
<dbReference type="PeptideAtlas" id="P11433"/>
<dbReference type="EnsemblFungi" id="YAL041W_mRNA">
    <property type="protein sequence ID" value="YAL041W"/>
    <property type="gene ID" value="YAL041W"/>
</dbReference>
<dbReference type="GeneID" id="851190"/>
<dbReference type="KEGG" id="sce:YAL041W"/>
<dbReference type="AGR" id="SGD:S000000039"/>
<dbReference type="SGD" id="S000000039">
    <property type="gene designation" value="CDC24"/>
</dbReference>
<dbReference type="VEuPathDB" id="FungiDB:YAL041W"/>
<dbReference type="eggNOG" id="KOG3519">
    <property type="taxonomic scope" value="Eukaryota"/>
</dbReference>
<dbReference type="GeneTree" id="ENSGT00940000174094"/>
<dbReference type="HOGENOM" id="CLU_007879_0_0_1"/>
<dbReference type="InParanoid" id="P11433"/>
<dbReference type="OMA" id="NWRGFNL"/>
<dbReference type="OrthoDB" id="1594986at2759"/>
<dbReference type="BioCyc" id="YEAST:G3O-28849-MONOMER"/>
<dbReference type="BioGRID-ORCS" id="851190">
    <property type="hits" value="8 hits in 10 CRISPR screens"/>
</dbReference>
<dbReference type="EvolutionaryTrace" id="P11433"/>
<dbReference type="PRO" id="PR:P11433"/>
<dbReference type="Proteomes" id="UP000002311">
    <property type="component" value="Chromosome I"/>
</dbReference>
<dbReference type="RNAct" id="P11433">
    <property type="molecule type" value="protein"/>
</dbReference>
<dbReference type="GO" id="GO:0120171">
    <property type="term" value="C:Cdc24p-Far1p-Gbetagamma complex"/>
    <property type="evidence" value="ECO:0000314"/>
    <property type="project" value="SGD"/>
</dbReference>
<dbReference type="GO" id="GO:0005938">
    <property type="term" value="C:cell cortex"/>
    <property type="evidence" value="ECO:0000303"/>
    <property type="project" value="ComplexPortal"/>
</dbReference>
<dbReference type="GO" id="GO:0005935">
    <property type="term" value="C:cellular bud neck"/>
    <property type="evidence" value="ECO:0000314"/>
    <property type="project" value="SGD"/>
</dbReference>
<dbReference type="GO" id="GO:0005934">
    <property type="term" value="C:cellular bud tip"/>
    <property type="evidence" value="ECO:0000314"/>
    <property type="project" value="SGD"/>
</dbReference>
<dbReference type="GO" id="GO:0005737">
    <property type="term" value="C:cytoplasm"/>
    <property type="evidence" value="ECO:0000314"/>
    <property type="project" value="SGD"/>
</dbReference>
<dbReference type="GO" id="GO:0000935">
    <property type="term" value="C:division septum"/>
    <property type="evidence" value="ECO:0000318"/>
    <property type="project" value="GO_Central"/>
</dbReference>
<dbReference type="GO" id="GO:0000131">
    <property type="term" value="C:incipient cellular bud site"/>
    <property type="evidence" value="ECO:0000314"/>
    <property type="project" value="SGD"/>
</dbReference>
<dbReference type="GO" id="GO:0043332">
    <property type="term" value="C:mating projection tip"/>
    <property type="evidence" value="ECO:0000314"/>
    <property type="project" value="SGD"/>
</dbReference>
<dbReference type="GO" id="GO:0005634">
    <property type="term" value="C:nucleus"/>
    <property type="evidence" value="ECO:0000314"/>
    <property type="project" value="SGD"/>
</dbReference>
<dbReference type="GO" id="GO:0120157">
    <property type="term" value="C:PAR polarity complex"/>
    <property type="evidence" value="ECO:0000353"/>
    <property type="project" value="ComplexPortal"/>
</dbReference>
<dbReference type="GO" id="GO:0005085">
    <property type="term" value="F:guanyl-nucleotide exchange factor activity"/>
    <property type="evidence" value="ECO:0000314"/>
    <property type="project" value="SGD"/>
</dbReference>
<dbReference type="GO" id="GO:0000282">
    <property type="term" value="P:cellular bud site selection"/>
    <property type="evidence" value="ECO:0000315"/>
    <property type="project" value="SGD"/>
</dbReference>
<dbReference type="GO" id="GO:0043577">
    <property type="term" value="P:chemotropism"/>
    <property type="evidence" value="ECO:0000315"/>
    <property type="project" value="SGD"/>
</dbReference>
<dbReference type="GO" id="GO:0030010">
    <property type="term" value="P:establishment of cell polarity"/>
    <property type="evidence" value="ECO:0000318"/>
    <property type="project" value="GO_Central"/>
</dbReference>
<dbReference type="GO" id="GO:0035556">
    <property type="term" value="P:intracellular signal transduction"/>
    <property type="evidence" value="ECO:0007669"/>
    <property type="project" value="InterPro"/>
</dbReference>
<dbReference type="GO" id="GO:0000750">
    <property type="term" value="P:pheromone-dependent signal transduction involved in conjugation with cellular fusion"/>
    <property type="evidence" value="ECO:0000315"/>
    <property type="project" value="SGD"/>
</dbReference>
<dbReference type="GO" id="GO:0072697">
    <property type="term" value="P:protein localization to cell cortex"/>
    <property type="evidence" value="ECO:0000315"/>
    <property type="project" value="SGD"/>
</dbReference>
<dbReference type="GO" id="GO:0007096">
    <property type="term" value="P:regulation of exit from mitosis"/>
    <property type="evidence" value="ECO:0000315"/>
    <property type="project" value="SGD"/>
</dbReference>
<dbReference type="GO" id="GO:0010969">
    <property type="term" value="P:regulation of pheromone-dependent signal transduction involved in conjugation with cellular fusion"/>
    <property type="evidence" value="ECO:0000303"/>
    <property type="project" value="ComplexPortal"/>
</dbReference>
<dbReference type="GO" id="GO:0035023">
    <property type="term" value="P:regulation of Rho protein signal transduction"/>
    <property type="evidence" value="ECO:0000303"/>
    <property type="project" value="ComplexPortal"/>
</dbReference>
<dbReference type="GO" id="GO:0000749">
    <property type="term" value="P:response to pheromone triggering conjugation with cellular fusion"/>
    <property type="evidence" value="ECO:0000315"/>
    <property type="project" value="SGD"/>
</dbReference>
<dbReference type="GO" id="GO:0031106">
    <property type="term" value="P:septin ring organization"/>
    <property type="evidence" value="ECO:0000315"/>
    <property type="project" value="SGD"/>
</dbReference>
<dbReference type="CDD" id="cd05992">
    <property type="entry name" value="PB1"/>
    <property type="match status" value="1"/>
</dbReference>
<dbReference type="CDD" id="cd13246">
    <property type="entry name" value="PH_Scd1"/>
    <property type="match status" value="1"/>
</dbReference>
<dbReference type="CDD" id="cd00160">
    <property type="entry name" value="RhoGEF"/>
    <property type="match status" value="1"/>
</dbReference>
<dbReference type="FunFam" id="1.20.900.10:FF:000050">
    <property type="entry name" value="Guanine nucleotide exchange factor"/>
    <property type="match status" value="1"/>
</dbReference>
<dbReference type="Gene3D" id="1.10.418.10">
    <property type="entry name" value="Calponin-like domain"/>
    <property type="match status" value="1"/>
</dbReference>
<dbReference type="Gene3D" id="1.20.900.10">
    <property type="entry name" value="Dbl homology (DH) domain"/>
    <property type="match status" value="1"/>
</dbReference>
<dbReference type="Gene3D" id="3.10.20.90">
    <property type="entry name" value="Phosphatidylinositol 3-kinase Catalytic Subunit, Chain A, domain 1"/>
    <property type="match status" value="1"/>
</dbReference>
<dbReference type="Gene3D" id="2.30.29.30">
    <property type="entry name" value="Pleckstrin-homology domain (PH domain)/Phosphotyrosine-binding domain (PTB)"/>
    <property type="match status" value="1"/>
</dbReference>
<dbReference type="InterPro" id="IPR010481">
    <property type="entry name" value="Cdc24/Scd1_N"/>
</dbReference>
<dbReference type="InterPro" id="IPR033511">
    <property type="entry name" value="Cdc24/Scd1_PH_dom"/>
</dbReference>
<dbReference type="InterPro" id="IPR053026">
    <property type="entry name" value="CDC42_GEF"/>
</dbReference>
<dbReference type="InterPro" id="IPR001715">
    <property type="entry name" value="CH_dom"/>
</dbReference>
<dbReference type="InterPro" id="IPR036872">
    <property type="entry name" value="CH_dom_sf"/>
</dbReference>
<dbReference type="InterPro" id="IPR035899">
    <property type="entry name" value="DBL_dom_sf"/>
</dbReference>
<dbReference type="InterPro" id="IPR000219">
    <property type="entry name" value="DH_dom"/>
</dbReference>
<dbReference type="InterPro" id="IPR001331">
    <property type="entry name" value="GDS_CDC24_CS"/>
</dbReference>
<dbReference type="InterPro" id="IPR053793">
    <property type="entry name" value="PB1-like"/>
</dbReference>
<dbReference type="InterPro" id="IPR000270">
    <property type="entry name" value="PB1_dom"/>
</dbReference>
<dbReference type="InterPro" id="IPR011993">
    <property type="entry name" value="PH-like_dom_sf"/>
</dbReference>
<dbReference type="InterPro" id="IPR001849">
    <property type="entry name" value="PH_domain"/>
</dbReference>
<dbReference type="PANTHER" id="PTHR47339">
    <property type="entry name" value="CELL DIVISION CONTROL PROTEIN 24"/>
    <property type="match status" value="1"/>
</dbReference>
<dbReference type="PANTHER" id="PTHR47339:SF1">
    <property type="entry name" value="CELL DIVISION CONTROL PROTEIN 24"/>
    <property type="match status" value="1"/>
</dbReference>
<dbReference type="Pfam" id="PF06395">
    <property type="entry name" value="CDC24"/>
    <property type="match status" value="1"/>
</dbReference>
<dbReference type="Pfam" id="PF15411">
    <property type="entry name" value="PH_10"/>
    <property type="match status" value="1"/>
</dbReference>
<dbReference type="Pfam" id="PF00621">
    <property type="entry name" value="RhoGEF"/>
    <property type="match status" value="1"/>
</dbReference>
<dbReference type="SMART" id="SM00033">
    <property type="entry name" value="CH"/>
    <property type="match status" value="1"/>
</dbReference>
<dbReference type="SMART" id="SM00666">
    <property type="entry name" value="PB1"/>
    <property type="match status" value="1"/>
</dbReference>
<dbReference type="SMART" id="SM00233">
    <property type="entry name" value="PH"/>
    <property type="match status" value="1"/>
</dbReference>
<dbReference type="SMART" id="SM00325">
    <property type="entry name" value="RhoGEF"/>
    <property type="match status" value="1"/>
</dbReference>
<dbReference type="SUPFAM" id="SSF54277">
    <property type="entry name" value="CAD &amp; PB1 domains"/>
    <property type="match status" value="1"/>
</dbReference>
<dbReference type="SUPFAM" id="SSF48065">
    <property type="entry name" value="DBL homology domain (DH-domain)"/>
    <property type="match status" value="1"/>
</dbReference>
<dbReference type="SUPFAM" id="SSF50729">
    <property type="entry name" value="PH domain-like"/>
    <property type="match status" value="1"/>
</dbReference>
<dbReference type="PROSITE" id="PS50021">
    <property type="entry name" value="CH"/>
    <property type="match status" value="1"/>
</dbReference>
<dbReference type="PROSITE" id="PS00741">
    <property type="entry name" value="DH_1"/>
    <property type="match status" value="1"/>
</dbReference>
<dbReference type="PROSITE" id="PS50010">
    <property type="entry name" value="DH_2"/>
    <property type="match status" value="1"/>
</dbReference>
<dbReference type="PROSITE" id="PS51745">
    <property type="entry name" value="PB1"/>
    <property type="match status" value="1"/>
</dbReference>
<dbReference type="PROSITE" id="PS50003">
    <property type="entry name" value="PH_DOMAIN"/>
    <property type="match status" value="1"/>
</dbReference>
<organism>
    <name type="scientific">Saccharomyces cerevisiae (strain ATCC 204508 / S288c)</name>
    <name type="common">Baker's yeast</name>
    <dbReference type="NCBI Taxonomy" id="559292"/>
    <lineage>
        <taxon>Eukaryota</taxon>
        <taxon>Fungi</taxon>
        <taxon>Dikarya</taxon>
        <taxon>Ascomycota</taxon>
        <taxon>Saccharomycotina</taxon>
        <taxon>Saccharomycetes</taxon>
        <taxon>Saccharomycetales</taxon>
        <taxon>Saccharomycetaceae</taxon>
        <taxon>Saccharomyces</taxon>
    </lineage>
</organism>
<keyword id="KW-0002">3D-structure</keyword>
<keyword id="KW-0344">Guanine-nucleotide releasing factor</keyword>
<keyword id="KW-1185">Reference proteome</keyword>
<feature type="chain" id="PRO_0000080934" description="Cell division control protein 24">
    <location>
        <begin position="1"/>
        <end position="854"/>
    </location>
</feature>
<feature type="domain" description="Calponin-homology (CH)" evidence="1">
    <location>
        <begin position="135"/>
        <end position="246"/>
    </location>
</feature>
<feature type="domain" description="DH" evidence="2">
    <location>
        <begin position="278"/>
        <end position="454"/>
    </location>
</feature>
<feature type="domain" description="PH" evidence="3">
    <location>
        <begin position="478"/>
        <end position="668"/>
    </location>
</feature>
<feature type="domain" description="PB1" evidence="4">
    <location>
        <begin position="761"/>
        <end position="854"/>
    </location>
</feature>
<feature type="region of interest" description="Disordered" evidence="5">
    <location>
        <begin position="1"/>
        <end position="24"/>
    </location>
</feature>
<feature type="region of interest" description="Disordered" evidence="5">
    <location>
        <begin position="542"/>
        <end position="571"/>
    </location>
</feature>
<feature type="region of interest" description="Disordered" evidence="5">
    <location>
        <begin position="674"/>
        <end position="745"/>
    </location>
</feature>
<feature type="compositionally biased region" description="Polar residues" evidence="5">
    <location>
        <begin position="1"/>
        <end position="14"/>
    </location>
</feature>
<feature type="compositionally biased region" description="Low complexity" evidence="5">
    <location>
        <begin position="682"/>
        <end position="707"/>
    </location>
</feature>
<feature type="strand" evidence="9">
    <location>
        <begin position="762"/>
        <end position="768"/>
    </location>
</feature>
<feature type="strand" evidence="8">
    <location>
        <begin position="780"/>
        <end position="784"/>
    </location>
</feature>
<feature type="helix" evidence="8">
    <location>
        <begin position="792"/>
        <end position="801"/>
    </location>
</feature>
<feature type="turn" evidence="8">
    <location>
        <begin position="802"/>
        <end position="806"/>
    </location>
</feature>
<feature type="strand" evidence="8">
    <location>
        <begin position="817"/>
        <end position="820"/>
    </location>
</feature>
<feature type="turn" evidence="8">
    <location>
        <begin position="821"/>
        <end position="823"/>
    </location>
</feature>
<feature type="strand" evidence="8">
    <location>
        <begin position="824"/>
        <end position="827"/>
    </location>
</feature>
<feature type="helix" evidence="8">
    <location>
        <begin position="833"/>
        <end position="844"/>
    </location>
</feature>
<feature type="strand" evidence="8">
    <location>
        <begin position="848"/>
        <end position="852"/>
    </location>
</feature>
<reference key="1">
    <citation type="journal article" date="1987" name="Gene">
        <title>Nucleotide sequence of the CLS4 (CDC24) gene of Saccharomyces cerevisiae.</title>
        <authorList>
            <person name="Miyamoto S."/>
            <person name="Ohya Y."/>
            <person name="Ohsumi Y."/>
            <person name="Anraku Y."/>
        </authorList>
    </citation>
    <scope>NUCLEOTIDE SEQUENCE [GENOMIC DNA]</scope>
</reference>
<reference key="2">
    <citation type="journal article" date="1991" name="Biochem. Biophys. Res. Commun.">
        <title>A DBL-homologous region of the yeast CLS4/CDC24 gene product is important for Ca(2+)-modulated bud assembly.</title>
        <authorList>
            <person name="Miyamoto S."/>
            <person name="Ohya Y."/>
            <person name="Sano Y."/>
            <person name="Sakaguchi S."/>
            <person name="Iida H."/>
            <person name="Anraku Y."/>
        </authorList>
    </citation>
    <scope>SEQUENCE REVISION</scope>
    <scope>SIMILARITY TO CDC24 FAMILY</scope>
</reference>
<reference key="3">
    <citation type="journal article" date="1995" name="Proc. Natl. Acad. Sci. U.S.A.">
        <title>The nucleotide sequence of chromosome I from Saccharomyces cerevisiae.</title>
        <authorList>
            <person name="Bussey H."/>
            <person name="Kaback D.B."/>
            <person name="Zhong W.-W."/>
            <person name="Vo D.H."/>
            <person name="Clark M.W."/>
            <person name="Fortin N."/>
            <person name="Hall J."/>
            <person name="Ouellette B.F.F."/>
            <person name="Keng T."/>
            <person name="Barton A.B."/>
            <person name="Su Y."/>
            <person name="Davies C.J."/>
            <person name="Storms R.K."/>
        </authorList>
    </citation>
    <scope>NUCLEOTIDE SEQUENCE [LARGE SCALE GENOMIC DNA]</scope>
    <source>
        <strain>ATCC 204508 / S288c</strain>
    </source>
</reference>
<reference key="4">
    <citation type="journal article" date="2014" name="G3 (Bethesda)">
        <title>The reference genome sequence of Saccharomyces cerevisiae: Then and now.</title>
        <authorList>
            <person name="Engel S.R."/>
            <person name="Dietrich F.S."/>
            <person name="Fisk D.G."/>
            <person name="Binkley G."/>
            <person name="Balakrishnan R."/>
            <person name="Costanzo M.C."/>
            <person name="Dwight S.S."/>
            <person name="Hitz B.C."/>
            <person name="Karra K."/>
            <person name="Nash R.S."/>
            <person name="Weng S."/>
            <person name="Wong E.D."/>
            <person name="Lloyd P."/>
            <person name="Skrzypek M.S."/>
            <person name="Miyasato S.R."/>
            <person name="Simison M."/>
            <person name="Cherry J.M."/>
        </authorList>
    </citation>
    <scope>GENOME REANNOTATION</scope>
    <source>
        <strain>ATCC 204508 / S288c</strain>
    </source>
</reference>
<reference key="5">
    <citation type="journal article" date="2003" name="Nature">
        <title>Global analysis of protein expression in yeast.</title>
        <authorList>
            <person name="Ghaemmaghami S."/>
            <person name="Huh W.-K."/>
            <person name="Bower K."/>
            <person name="Howson R.W."/>
            <person name="Belle A."/>
            <person name="Dephoure N."/>
            <person name="O'Shea E.K."/>
            <person name="Weissman J.S."/>
        </authorList>
    </citation>
    <scope>LEVEL OF PROTEIN EXPRESSION [LARGE SCALE ANALYSIS]</scope>
</reference>
<reference key="6">
    <citation type="journal article" date="2007" name="J. Proteome Res.">
        <title>Large-scale phosphorylation analysis of alpha-factor-arrested Saccharomyces cerevisiae.</title>
        <authorList>
            <person name="Li X."/>
            <person name="Gerber S.A."/>
            <person name="Rudner A.D."/>
            <person name="Beausoleil S.A."/>
            <person name="Haas W."/>
            <person name="Villen J."/>
            <person name="Elias J.E."/>
            <person name="Gygi S.P."/>
        </authorList>
    </citation>
    <scope>IDENTIFICATION BY MASS SPECTROMETRY [LARGE SCALE ANALYSIS]</scope>
    <source>
        <strain>ADR376</strain>
    </source>
</reference>
<reference key="7">
    <citation type="journal article" date="2007" name="Mol. Biol. Cell">
        <title>Sequential and distinct roles of the cadherin domain-containing protein Axl2p in cell polarization in yeast cell cycle.</title>
        <authorList>
            <person name="Gao X.D."/>
            <person name="Sperber L.M."/>
            <person name="Kane S.A."/>
            <person name="Tong Z."/>
            <person name="Tong A.H."/>
            <person name="Boone C."/>
            <person name="Bi E."/>
        </authorList>
    </citation>
    <scope>INTERACTION WITH AXL2</scope>
    <scope>FUNCTION</scope>
</reference>
<reference key="8">
    <citation type="journal article" date="2007" name="Proc. Natl. Acad. Sci. U.S.A.">
        <title>Analysis of phosphorylation sites on proteins from Saccharomyces cerevisiae by electron transfer dissociation (ETD) mass spectrometry.</title>
        <authorList>
            <person name="Chi A."/>
            <person name="Huttenhower C."/>
            <person name="Geer L.Y."/>
            <person name="Coon J.J."/>
            <person name="Syka J.E.P."/>
            <person name="Bai D.L."/>
            <person name="Shabanowitz J."/>
            <person name="Burke D.J."/>
            <person name="Troyanskaya O.G."/>
            <person name="Hunt D.F."/>
        </authorList>
    </citation>
    <scope>IDENTIFICATION BY MASS SPECTROMETRY [LARGE SCALE ANALYSIS]</scope>
</reference>
<reference key="9">
    <citation type="journal article" date="2008" name="Mol. Cell. Proteomics">
        <title>A multidimensional chromatography technology for in-depth phosphoproteome analysis.</title>
        <authorList>
            <person name="Albuquerque C.P."/>
            <person name="Smolka M.B."/>
            <person name="Payne S.H."/>
            <person name="Bafna V."/>
            <person name="Eng J."/>
            <person name="Zhou H."/>
        </authorList>
    </citation>
    <scope>IDENTIFICATION BY MASS SPECTROMETRY [LARGE SCALE ANALYSIS]</scope>
</reference>
<reference key="10">
    <citation type="journal article" date="2009" name="Science">
        <title>Global analysis of Cdk1 substrate phosphorylation sites provides insights into evolution.</title>
        <authorList>
            <person name="Holt L.J."/>
            <person name="Tuch B.B."/>
            <person name="Villen J."/>
            <person name="Johnson A.D."/>
            <person name="Gygi S.P."/>
            <person name="Morgan D.O."/>
        </authorList>
    </citation>
    <scope>IDENTIFICATION BY MASS SPECTROMETRY [LARGE SCALE ANALYSIS]</scope>
</reference>
<name>CDC24_YEAST</name>
<sequence length="854" mass="96940">MAIQTRFASGTSLSDLKPKPSATSISIPMQNVMNKPVTEQDSLFHICANIRKRLEVLPQLKPFLQLAYQSSEVLSERQSLLLSQKQHQELLKSNGANRDSSDLAPTLRSSSISTATSLMSMEGISYTNSNPSATPNMEDTLLTFSMGILPITMDCDPVTQLSQLFQQGAPLCILFNSVKPQFKLPVIASDDLKVCKKSIYDFILGCKKHFAFNDEELFTISDVFANSTSQLVKVLEVVETLMNSSPTIFPSKSKTQQIMNAENQHRHQPQQSSKKHNEYVKIIKEFVATERKYVHDLEILDKYRQQLLDSNLITSEELYMLFPNLGDAIDFQRRFLISLEINALVEPSKQRIGALFMHSKHFFKLYEPWSIGQNAAIEFLSSTLHKMRVDESQRFIINNKLELQSFLYKPVQRLCRYPLLVKELLAESSDDNNTKELEAALDISKNIARSINENQRRTENHQVVKKLYGRVVNWKGYRISKFGELLYFDKVFISTTNSSSEPEREFEVYLFEKIIILFSEVVTKKSASSLILKKKSSTSASISASNITDNNGSPHHSYHKRHSNSSSSNNIHLSSSSAAAIIHSSTNSSDNNSNNSSSSSLFKLSANEPKLDLRGRIMIMNLNQIIPQNNRSLNITWESIKEQGNFLLKFKNEETRDNWSSCLQQLIHDLKNEQFKARHHSSTSTTSSTAKSSSMMSPTTTMNTPNHHNSRQTHDSMASFSSSHMKRVSDVLPKRRTTSSSFESEIKSISENFKNSIPESSILFRISYNNNSNNTSSSEIFTLLVEKVWNFDDLIMAINSKISNTHNNNISPITKIKYQDEDGDFVVLGSDEDWNVAKEMLAENNEKFLNIRLY</sequence>
<gene>
    <name type="primary">CDC24</name>
    <name type="synonym">CLS4</name>
    <name type="ordered locus">YAL041W</name>
</gene>
<protein>
    <recommendedName>
        <fullName>Cell division control protein 24</fullName>
    </recommendedName>
    <alternativeName>
        <fullName>Calcium regulatory protein</fullName>
    </alternativeName>
</protein>
<proteinExistence type="evidence at protein level"/>
<accession>P11433</accession>
<accession>D6VPH5</accession>
<comment type="function">
    <text evidence="7">Promotes the exchange of CDC42-bound GDP by GTP. Controls the polarity of calmodulin, and the calcium regulatory process of bud emergence. CDC24 may be involved in the initial selection and organization of the budding site.</text>
</comment>
<comment type="subunit">
    <text evidence="7">Interacts with AXL2.</text>
</comment>
<comment type="interaction">
    <interactant intactId="EBI-4220">
        <id>P11433</id>
    </interactant>
    <interactant intactId="EBI-3508">
        <id>P29366</id>
        <label>BEM1</label>
    </interactant>
    <organismsDiffer>false</organismsDiffer>
    <experiments>23</experiments>
</comment>
<comment type="interaction">
    <interactant intactId="EBI-4220">
        <id>P11433</id>
    </interactant>
    <interactant intactId="EBI-4274">
        <id>P19073</id>
        <label>CDC42</label>
    </interactant>
    <organismsDiffer>false</organismsDiffer>
    <experiments>4</experiments>
</comment>
<comment type="interaction">
    <interactant intactId="EBI-4220">
        <id>P11433</id>
    </interactant>
    <interactant intactId="EBI-4750">
        <id>P48562</id>
        <label>CLA4</label>
    </interactant>
    <organismsDiffer>false</organismsDiffer>
    <experiments>5</experiments>
</comment>
<comment type="interaction">
    <interactant intactId="EBI-4220">
        <id>P11433</id>
    </interactant>
    <interactant intactId="EBI-6780">
        <id>P21268</id>
        <label>FAR1</label>
    </interactant>
    <organismsDiffer>false</organismsDiffer>
    <experiments>8</experiments>
</comment>
<comment type="interaction">
    <interactant intactId="EBI-4220">
        <id>P11433</id>
    </interactant>
    <interactant intactId="EBI-36841">
        <id>Q08229</id>
        <label>NBA1</label>
    </interactant>
    <organismsDiffer>false</organismsDiffer>
    <experiments>6</experiments>
</comment>
<comment type="interaction">
    <interactant intactId="EBI-4220">
        <id>P11433</id>
    </interactant>
    <interactant intactId="EBI-7390">
        <id>P18851</id>
        <label>STE4</label>
    </interactant>
    <organismsDiffer>false</organismsDiffer>
    <experiments>6</experiments>
</comment>
<comment type="miscellaneous">
    <text evidence="6">Present with 1010 molecules/cell in log phase SD medium.</text>
</comment>
<evidence type="ECO:0000255" key="1">
    <source>
        <dbReference type="PROSITE-ProRule" id="PRU00044"/>
    </source>
</evidence>
<evidence type="ECO:0000255" key="2">
    <source>
        <dbReference type="PROSITE-ProRule" id="PRU00062"/>
    </source>
</evidence>
<evidence type="ECO:0000255" key="3">
    <source>
        <dbReference type="PROSITE-ProRule" id="PRU00145"/>
    </source>
</evidence>
<evidence type="ECO:0000255" key="4">
    <source>
        <dbReference type="PROSITE-ProRule" id="PRU01081"/>
    </source>
</evidence>
<evidence type="ECO:0000256" key="5">
    <source>
        <dbReference type="SAM" id="MobiDB-lite"/>
    </source>
</evidence>
<evidence type="ECO:0000269" key="6">
    <source>
    </source>
</evidence>
<evidence type="ECO:0000269" key="7">
    <source>
    </source>
</evidence>
<evidence type="ECO:0007829" key="8">
    <source>
        <dbReference type="PDB" id="1PQS"/>
    </source>
</evidence>
<evidence type="ECO:0007829" key="9">
    <source>
        <dbReference type="PDB" id="1Q1O"/>
    </source>
</evidence>